<organism>
    <name type="scientific">Mus musculus</name>
    <name type="common">Mouse</name>
    <dbReference type="NCBI Taxonomy" id="10090"/>
    <lineage>
        <taxon>Eukaryota</taxon>
        <taxon>Metazoa</taxon>
        <taxon>Chordata</taxon>
        <taxon>Craniata</taxon>
        <taxon>Vertebrata</taxon>
        <taxon>Euteleostomi</taxon>
        <taxon>Mammalia</taxon>
        <taxon>Eutheria</taxon>
        <taxon>Euarchontoglires</taxon>
        <taxon>Glires</taxon>
        <taxon>Rodentia</taxon>
        <taxon>Myomorpha</taxon>
        <taxon>Muroidea</taxon>
        <taxon>Muridae</taxon>
        <taxon>Murinae</taxon>
        <taxon>Mus</taxon>
        <taxon>Mus</taxon>
    </lineage>
</organism>
<reference key="1">
    <citation type="journal article" date="1992" name="Science">
        <title>The primary structure of MEK, a protein kinase that phosphorylates the ERK gene product.</title>
        <authorList>
            <person name="Crews C.M."/>
            <person name="Alessandrini A."/>
            <person name="Erikson R.L."/>
        </authorList>
    </citation>
    <scope>NUCLEOTIDE SEQUENCE [MRNA]</scope>
    <scope>PARTIAL PROTEIN SEQUENCE</scope>
</reference>
<reference key="2">
    <citation type="journal article" date="2004" name="Genome Res.">
        <title>The status, quality, and expansion of the NIH full-length cDNA project: the Mammalian Gene Collection (MGC).</title>
        <authorList>
            <consortium name="The MGC Project Team"/>
        </authorList>
    </citation>
    <scope>NUCLEOTIDE SEQUENCE [LARGE SCALE MRNA]</scope>
    <source>
        <strain>C57BL/6J</strain>
        <tissue>Brain</tissue>
    </source>
</reference>
<reference key="3">
    <citation type="journal article" date="1992" name="Proc. Natl. Acad. Sci. U.S.A.">
        <title>Purification of a murine protein-tyrosine/threonine kinase that phosphorylates and activates the Erk-1 gene product: relationship to the fission yeast byr1 gene product.</title>
        <authorList>
            <person name="Crews C.M."/>
            <person name="Erikson R.L."/>
        </authorList>
    </citation>
    <scope>PROTEIN SEQUENCE OF 4-20; 71-84; 114-136; 206-234 AND 363-384</scope>
    <source>
        <tissue>T-cell</tissue>
    </source>
</reference>
<reference key="4">
    <citation type="submission" date="2007-03" db="UniProtKB">
        <authorList>
            <person name="Lubec G."/>
            <person name="Klug S."/>
        </authorList>
    </citation>
    <scope>PROTEIN SEQUENCE OF 206-227; 270-291 AND 325-340</scope>
    <scope>IDENTIFICATION BY MASS SPECTROMETRY</scope>
    <source>
        <tissue>Hippocampus</tissue>
    </source>
</reference>
<reference key="5">
    <citation type="journal article" date="1993" name="Science">
        <title>A divergence in the MAP kinase regulatory network defined by MEK kinase and Raf.</title>
        <authorList>
            <person name="Lange-Carter C.A."/>
            <person name="Pleiman C.M."/>
            <person name="Gardner A.M."/>
            <person name="Blumer K.J."/>
            <person name="Johnson G.L."/>
        </authorList>
    </citation>
    <scope>PHOSPHORYLATION AND ACTIVITY REGULATION</scope>
</reference>
<reference key="6">
    <citation type="journal article" date="1998" name="Science">
        <title>Proteolytic inactivation of MAP-kinase-kinase by anthrax lethal factor.</title>
        <authorList>
            <person name="Duesbery N.S."/>
            <person name="Webb C.P."/>
            <person name="Leppla S.H."/>
            <person name="Gordon V.M."/>
            <person name="Klimpel K.R."/>
            <person name="Copeland T.D."/>
            <person name="Ahn N.G."/>
            <person name="Oskarsson M.K."/>
            <person name="Fukasawa K."/>
            <person name="Paull K.D."/>
            <person name="Vande Woude G.F."/>
        </authorList>
    </citation>
    <scope>CLEAVAGE BY ANTHRAX LETHAL FACTOR</scope>
</reference>
<reference key="7">
    <citation type="journal article" date="1999" name="Mol. Cell. Biol.">
        <title>Kinase suppressor of Ras forms a multiprotein signaling complex and modulates MEK localization.</title>
        <authorList>
            <person name="Stewart S."/>
            <person name="Sundaram M."/>
            <person name="Zhang Y."/>
            <person name="Lee J."/>
            <person name="Han M."/>
            <person name="Guan K.L."/>
        </authorList>
    </citation>
    <scope>INTERACTION WITH KSR1</scope>
    <scope>SUBCELLULAR LOCATION</scope>
    <scope>PHOSPHORYLATION AT SER-218</scope>
</reference>
<reference key="8">
    <citation type="journal article" date="2004" name="Proc. Natl. Acad. Sci. U.S.A.">
        <title>Modular construction of a signaling scaffold: MORG1 interacts with components of the ERK cascade and links ERK signaling to specific agonists.</title>
        <authorList>
            <person name="Vomastek T."/>
            <person name="Schaeffer H.-J."/>
            <person name="Tarcsafalvi A."/>
            <person name="Smolkin M.E."/>
            <person name="Bissonette E.A."/>
            <person name="Weber M.J."/>
        </authorList>
    </citation>
    <scope>INTERACTION WITH MORG1</scope>
</reference>
<reference key="9">
    <citation type="journal article" date="2009" name="Nat. Struct. Mol. Biol.">
        <title>A Mek1-Mek2 heterodimer determines the strength and duration of the Erk signal.</title>
        <authorList>
            <person name="Catalanotti F."/>
            <person name="Reyes G."/>
            <person name="Jesenberger V."/>
            <person name="Galabova-Kovacs G."/>
            <person name="de Matos Simoes R."/>
            <person name="Carugo O."/>
            <person name="Baccarini M."/>
        </authorList>
    </citation>
    <scope>DISRUPTION PHENOTYPE</scope>
    <scope>FUNCTION</scope>
    <scope>INTERACTION WITH MAP2K2/MEK2</scope>
    <scope>PHOSPHORYLATION AT THR-292</scope>
    <scope>MUTAGENESIS OF ASN-78 AND THR-292</scope>
</reference>
<reference key="10">
    <citation type="journal article" date="1998" name="Oncogene">
        <title>Signaling by dual specificity kinases.</title>
        <authorList>
            <person name="Dhanasekaran N."/>
            <person name="Premkumar Reddy E."/>
        </authorList>
    </citation>
    <scope>REVIEW ON FUNCTION</scope>
</reference>
<reference key="11">
    <citation type="journal article" date="2004" name="Nat. Rev. Mol. Cell Biol.">
        <title>The RAF proteins take centre stage.</title>
        <authorList>
            <person name="Wellbrock C."/>
            <person name="Karasarides M."/>
            <person name="Marais R."/>
        </authorList>
    </citation>
    <scope>REVIEW ON ACTIVITY REGULATION</scope>
</reference>
<reference key="12">
    <citation type="journal article" date="2009" name="BioFactors">
        <title>The ERK signaling cascade--views from different subcellular compartments.</title>
        <authorList>
            <person name="Yao Z."/>
            <person name="Seger R."/>
        </authorList>
    </citation>
    <scope>REVIEW ON FUNCTION</scope>
</reference>
<reference key="13">
    <citation type="journal article" date="2010" name="Cell">
        <title>A tissue-specific atlas of mouse protein phosphorylation and expression.</title>
        <authorList>
            <person name="Huttlin E.L."/>
            <person name="Jedrychowski M.P."/>
            <person name="Elias J.E."/>
            <person name="Goswami T."/>
            <person name="Rad R."/>
            <person name="Beausoleil S.A."/>
            <person name="Villen J."/>
            <person name="Haas W."/>
            <person name="Sowa M.E."/>
            <person name="Gygi S.P."/>
        </authorList>
    </citation>
    <scope>PHOSPHORYLATION [LARGE SCALE ANALYSIS] AT THR-286</scope>
    <scope>IDENTIFICATION BY MASS SPECTROMETRY [LARGE SCALE ANALYSIS]</scope>
    <source>
        <tissue>Brain</tissue>
        <tissue>Brown adipose tissue</tissue>
        <tissue>Heart</tissue>
        <tissue>Kidney</tissue>
        <tissue>Liver</tissue>
        <tissue>Lung</tissue>
        <tissue>Pancreas</tissue>
        <tissue>Spleen</tissue>
    </source>
</reference>
<reference key="14">
    <citation type="journal article" date="2011" name="Genes Cancer">
        <title>The ERK cascade: distinct functions within various subcellular organelles.</title>
        <authorList>
            <person name="Wortzel I."/>
            <person name="Seger R."/>
        </authorList>
    </citation>
    <scope>REVIEW ON FUNCTION</scope>
</reference>
<reference key="15">
    <citation type="journal article" date="2013" name="J. Biol. Chem.">
        <title>SCF(Fbxw15) mediates histone acetyltransferase binding to origin recognition complex (HBO1) ubiquitin-proteasomal degradation to regulate cell proliferation.</title>
        <authorList>
            <person name="Zou C."/>
            <person name="Chen Y."/>
            <person name="Smith R.M."/>
            <person name="Snavely C."/>
            <person name="Li J."/>
            <person name="Coon T.A."/>
            <person name="Chen B.B."/>
            <person name="Zhao Y."/>
            <person name="Mallampalli R.K."/>
        </authorList>
    </citation>
    <scope>INTERACTION WITH KAT7</scope>
</reference>
<evidence type="ECO:0000250" key="1"/>
<evidence type="ECO:0000250" key="2">
    <source>
        <dbReference type="UniProtKB" id="P29678"/>
    </source>
</evidence>
<evidence type="ECO:0000250" key="3">
    <source>
        <dbReference type="UniProtKB" id="Q01986"/>
    </source>
</evidence>
<evidence type="ECO:0000250" key="4">
    <source>
        <dbReference type="UniProtKB" id="Q02750"/>
    </source>
</evidence>
<evidence type="ECO:0000255" key="5">
    <source>
        <dbReference type="PROSITE-ProRule" id="PRU00159"/>
    </source>
</evidence>
<evidence type="ECO:0000255" key="6">
    <source>
        <dbReference type="PROSITE-ProRule" id="PRU10027"/>
    </source>
</evidence>
<evidence type="ECO:0000256" key="7">
    <source>
        <dbReference type="SAM" id="MobiDB-lite"/>
    </source>
</evidence>
<evidence type="ECO:0000269" key="8">
    <source>
    </source>
</evidence>
<evidence type="ECO:0000269" key="9">
    <source>
    </source>
</evidence>
<evidence type="ECO:0000269" key="10">
    <source>
    </source>
</evidence>
<evidence type="ECO:0000269" key="11">
    <source>
    </source>
</evidence>
<evidence type="ECO:0000269" key="12">
    <source>
    </source>
</evidence>
<evidence type="ECO:0000305" key="13"/>
<evidence type="ECO:0007744" key="14">
    <source>
    </source>
</evidence>
<keyword id="KW-0067">ATP-binding</keyword>
<keyword id="KW-0963">Cytoplasm</keyword>
<keyword id="KW-0206">Cytoskeleton</keyword>
<keyword id="KW-0903">Direct protein sequencing</keyword>
<keyword id="KW-0418">Kinase</keyword>
<keyword id="KW-0472">Membrane</keyword>
<keyword id="KW-0547">Nucleotide-binding</keyword>
<keyword id="KW-0539">Nucleus</keyword>
<keyword id="KW-0597">Phosphoprotein</keyword>
<keyword id="KW-1185">Reference proteome</keyword>
<keyword id="KW-0723">Serine/threonine-protein kinase</keyword>
<keyword id="KW-0808">Transferase</keyword>
<keyword id="KW-0829">Tyrosine-protein kinase</keyword>
<protein>
    <recommendedName>
        <fullName>Dual specificity mitogen-activated protein kinase kinase 1</fullName>
        <shortName>MAP kinase kinase 1</shortName>
        <shortName>MAPKK 1</shortName>
        <ecNumber>2.7.12.2</ecNumber>
    </recommendedName>
    <alternativeName>
        <fullName>ERK activator kinase 1</fullName>
    </alternativeName>
    <alternativeName>
        <fullName>MAPK/ERK kinase 1</fullName>
        <shortName>MEK 1</shortName>
    </alternativeName>
</protein>
<dbReference type="EC" id="2.7.12.2"/>
<dbReference type="EMBL" id="L02526">
    <property type="protein sequence ID" value="AAA39523.1"/>
    <property type="molecule type" value="mRNA"/>
</dbReference>
<dbReference type="EMBL" id="BC054754">
    <property type="protein sequence ID" value="AAH54754.1"/>
    <property type="molecule type" value="mRNA"/>
</dbReference>
<dbReference type="CCDS" id="CCDS23277.1"/>
<dbReference type="PIR" id="I59571">
    <property type="entry name" value="I59571"/>
</dbReference>
<dbReference type="RefSeq" id="NP_032953.1">
    <property type="nucleotide sequence ID" value="NM_008927.5"/>
</dbReference>
<dbReference type="SMR" id="P31938"/>
<dbReference type="BioGRID" id="204949">
    <property type="interactions" value="38"/>
</dbReference>
<dbReference type="CORUM" id="P31938"/>
<dbReference type="DIP" id="DIP-467N"/>
<dbReference type="FunCoup" id="P31938">
    <property type="interactions" value="4379"/>
</dbReference>
<dbReference type="IntAct" id="P31938">
    <property type="interactions" value="8"/>
</dbReference>
<dbReference type="MINT" id="P31938"/>
<dbReference type="STRING" id="10090.ENSMUSP00000005066"/>
<dbReference type="BindingDB" id="P31938"/>
<dbReference type="ChEMBL" id="CHEMBL5860"/>
<dbReference type="GlyGen" id="P31938">
    <property type="glycosylation" value="2 sites, 1 N-linked glycan (1 site), 1 O-linked glycan (1 site)"/>
</dbReference>
<dbReference type="iPTMnet" id="P31938"/>
<dbReference type="PhosphoSitePlus" id="P31938"/>
<dbReference type="SwissPalm" id="P31938"/>
<dbReference type="jPOST" id="P31938"/>
<dbReference type="PaxDb" id="10090-ENSMUSP00000005066"/>
<dbReference type="PeptideAtlas" id="P31938"/>
<dbReference type="ProteomicsDB" id="291393"/>
<dbReference type="Pumba" id="P31938"/>
<dbReference type="Antibodypedia" id="3542">
    <property type="antibodies" value="3498 antibodies from 51 providers"/>
</dbReference>
<dbReference type="DNASU" id="26395"/>
<dbReference type="Ensembl" id="ENSMUST00000005066.9">
    <property type="protein sequence ID" value="ENSMUSP00000005066.9"/>
    <property type="gene ID" value="ENSMUSG00000004936.9"/>
</dbReference>
<dbReference type="GeneID" id="26395"/>
<dbReference type="KEGG" id="mmu:26395"/>
<dbReference type="UCSC" id="uc009qbp.1">
    <property type="organism name" value="mouse"/>
</dbReference>
<dbReference type="AGR" id="MGI:1346866"/>
<dbReference type="CTD" id="5604"/>
<dbReference type="MGI" id="MGI:1346866">
    <property type="gene designation" value="Map2k1"/>
</dbReference>
<dbReference type="VEuPathDB" id="HostDB:ENSMUSG00000004936"/>
<dbReference type="eggNOG" id="KOG0581">
    <property type="taxonomic scope" value="Eukaryota"/>
</dbReference>
<dbReference type="GeneTree" id="ENSGT00940000153487"/>
<dbReference type="HOGENOM" id="CLU_000288_63_23_1"/>
<dbReference type="InParanoid" id="P31938"/>
<dbReference type="OMA" id="VGTMYFM"/>
<dbReference type="OrthoDB" id="10252354at2759"/>
<dbReference type="PhylomeDB" id="P31938"/>
<dbReference type="TreeFam" id="TF105137"/>
<dbReference type="BRENDA" id="2.7.12.2">
    <property type="organism ID" value="3474"/>
</dbReference>
<dbReference type="Reactome" id="R-MMU-110056">
    <property type="pathway name" value="MAPK3 (ERK1) activation"/>
</dbReference>
<dbReference type="Reactome" id="R-MMU-170968">
    <property type="pathway name" value="Frs2-mediated activation"/>
</dbReference>
<dbReference type="Reactome" id="R-MMU-445144">
    <property type="pathway name" value="Signal transduction by L1"/>
</dbReference>
<dbReference type="Reactome" id="R-MMU-5673000">
    <property type="pathway name" value="RAF activation"/>
</dbReference>
<dbReference type="Reactome" id="R-MMU-5674135">
    <property type="pathway name" value="MAP2K and MAPK activation"/>
</dbReference>
<dbReference type="Reactome" id="R-MMU-5674499">
    <property type="pathway name" value="Negative feedback regulation of MAPK pathway"/>
</dbReference>
<dbReference type="BioGRID-ORCS" id="26395">
    <property type="hits" value="1 hit in 83 CRISPR screens"/>
</dbReference>
<dbReference type="CD-CODE" id="01CA17F3">
    <property type="entry name" value="Centrosome"/>
</dbReference>
<dbReference type="CD-CODE" id="CE726F99">
    <property type="entry name" value="Postsynaptic density"/>
</dbReference>
<dbReference type="ChiTaRS" id="Map2k1">
    <property type="organism name" value="mouse"/>
</dbReference>
<dbReference type="PRO" id="PR:P31938"/>
<dbReference type="Proteomes" id="UP000000589">
    <property type="component" value="Chromosome 9"/>
</dbReference>
<dbReference type="RNAct" id="P31938">
    <property type="molecule type" value="protein"/>
</dbReference>
<dbReference type="Bgee" id="ENSMUSG00000004936">
    <property type="expression patterns" value="Expressed in dentate gyrus of hippocampal formation granule cell and 274 other cell types or tissues"/>
</dbReference>
<dbReference type="ExpressionAtlas" id="P31938">
    <property type="expression patterns" value="baseline and differential"/>
</dbReference>
<dbReference type="GO" id="GO:0030424">
    <property type="term" value="C:axon"/>
    <property type="evidence" value="ECO:0007669"/>
    <property type="project" value="Ensembl"/>
</dbReference>
<dbReference type="GO" id="GO:0005938">
    <property type="term" value="C:cell cortex"/>
    <property type="evidence" value="ECO:0007669"/>
    <property type="project" value="Ensembl"/>
</dbReference>
<dbReference type="GO" id="GO:0005813">
    <property type="term" value="C:centrosome"/>
    <property type="evidence" value="ECO:0007669"/>
    <property type="project" value="UniProtKB-SubCell"/>
</dbReference>
<dbReference type="GO" id="GO:0036064">
    <property type="term" value="C:ciliary basal body"/>
    <property type="evidence" value="ECO:0007669"/>
    <property type="project" value="Ensembl"/>
</dbReference>
<dbReference type="GO" id="GO:0005829">
    <property type="term" value="C:cytosol"/>
    <property type="evidence" value="ECO:0000304"/>
    <property type="project" value="UniProtKB"/>
</dbReference>
<dbReference type="GO" id="GO:0032839">
    <property type="term" value="C:dendrite cytoplasm"/>
    <property type="evidence" value="ECO:0007669"/>
    <property type="project" value="Ensembl"/>
</dbReference>
<dbReference type="GO" id="GO:0005769">
    <property type="term" value="C:early endosome"/>
    <property type="evidence" value="ECO:0000304"/>
    <property type="project" value="UniProtKB"/>
</dbReference>
<dbReference type="GO" id="GO:0005783">
    <property type="term" value="C:endoplasmic reticulum"/>
    <property type="evidence" value="ECO:0000266"/>
    <property type="project" value="MGI"/>
</dbReference>
<dbReference type="GO" id="GO:0005925">
    <property type="term" value="C:focal adhesion"/>
    <property type="evidence" value="ECO:0000304"/>
    <property type="project" value="UniProtKB"/>
</dbReference>
<dbReference type="GO" id="GO:0098978">
    <property type="term" value="C:glutamatergic synapse"/>
    <property type="evidence" value="ECO:0007669"/>
    <property type="project" value="Ensembl"/>
</dbReference>
<dbReference type="GO" id="GO:0005794">
    <property type="term" value="C:Golgi apparatus"/>
    <property type="evidence" value="ECO:0000304"/>
    <property type="project" value="UniProtKB"/>
</dbReference>
<dbReference type="GO" id="GO:0005770">
    <property type="term" value="C:late endosome"/>
    <property type="evidence" value="ECO:0000304"/>
    <property type="project" value="UniProtKB"/>
</dbReference>
<dbReference type="GO" id="GO:0005874">
    <property type="term" value="C:microtubule"/>
    <property type="evidence" value="ECO:0007669"/>
    <property type="project" value="Ensembl"/>
</dbReference>
<dbReference type="GO" id="GO:0005739">
    <property type="term" value="C:mitochondrion"/>
    <property type="evidence" value="ECO:0000304"/>
    <property type="project" value="UniProtKB"/>
</dbReference>
<dbReference type="GO" id="GO:0005634">
    <property type="term" value="C:nucleus"/>
    <property type="evidence" value="ECO:0000304"/>
    <property type="project" value="UniProtKB"/>
</dbReference>
<dbReference type="GO" id="GO:0043204">
    <property type="term" value="C:perikaryon"/>
    <property type="evidence" value="ECO:0007669"/>
    <property type="project" value="Ensembl"/>
</dbReference>
<dbReference type="GO" id="GO:0048471">
    <property type="term" value="C:perinuclear region of cytoplasm"/>
    <property type="evidence" value="ECO:0007669"/>
    <property type="project" value="Ensembl"/>
</dbReference>
<dbReference type="GO" id="GO:0005886">
    <property type="term" value="C:plasma membrane"/>
    <property type="evidence" value="ECO:0007669"/>
    <property type="project" value="Ensembl"/>
</dbReference>
<dbReference type="GO" id="GO:0014069">
    <property type="term" value="C:postsynaptic density"/>
    <property type="evidence" value="ECO:0007669"/>
    <property type="project" value="Ensembl"/>
</dbReference>
<dbReference type="GO" id="GO:0005524">
    <property type="term" value="F:ATP binding"/>
    <property type="evidence" value="ECO:0007669"/>
    <property type="project" value="UniProtKB-KW"/>
</dbReference>
<dbReference type="GO" id="GO:0004708">
    <property type="term" value="F:MAP kinase kinase activity"/>
    <property type="evidence" value="ECO:0000314"/>
    <property type="project" value="MGI"/>
</dbReference>
<dbReference type="GO" id="GO:0005078">
    <property type="term" value="F:MAP-kinase scaffold activity"/>
    <property type="evidence" value="ECO:0007669"/>
    <property type="project" value="Ensembl"/>
</dbReference>
<dbReference type="GO" id="GO:0031435">
    <property type="term" value="F:mitogen-activated protein kinase kinase kinase binding"/>
    <property type="evidence" value="ECO:0007669"/>
    <property type="project" value="Ensembl"/>
</dbReference>
<dbReference type="GO" id="GO:0106310">
    <property type="term" value="F:protein serine kinase activity"/>
    <property type="evidence" value="ECO:0007669"/>
    <property type="project" value="RHEA"/>
</dbReference>
<dbReference type="GO" id="GO:0043539">
    <property type="term" value="F:protein serine/threonine kinase activator activity"/>
    <property type="evidence" value="ECO:0007669"/>
    <property type="project" value="Ensembl"/>
</dbReference>
<dbReference type="GO" id="GO:0004674">
    <property type="term" value="F:protein serine/threonine kinase activity"/>
    <property type="evidence" value="ECO:0000314"/>
    <property type="project" value="MGI"/>
</dbReference>
<dbReference type="GO" id="GO:0004712">
    <property type="term" value="F:protein serine/threonine/tyrosine kinase activity"/>
    <property type="evidence" value="ECO:0000304"/>
    <property type="project" value="UniProtKB"/>
</dbReference>
<dbReference type="GO" id="GO:0004713">
    <property type="term" value="F:protein tyrosine kinase activity"/>
    <property type="evidence" value="ECO:0007669"/>
    <property type="project" value="UniProtKB-KW"/>
</dbReference>
<dbReference type="GO" id="GO:0044877">
    <property type="term" value="F:protein-containing complex binding"/>
    <property type="evidence" value="ECO:0007669"/>
    <property type="project" value="Ensembl"/>
</dbReference>
<dbReference type="GO" id="GO:0097110">
    <property type="term" value="F:scaffold protein binding"/>
    <property type="evidence" value="ECO:0007669"/>
    <property type="project" value="Ensembl"/>
</dbReference>
<dbReference type="GO" id="GO:0031267">
    <property type="term" value="F:small GTPase binding"/>
    <property type="evidence" value="ECO:0007669"/>
    <property type="project" value="Ensembl"/>
</dbReference>
<dbReference type="GO" id="GO:0060020">
    <property type="term" value="P:Bergmann glial cell differentiation"/>
    <property type="evidence" value="ECO:0000316"/>
    <property type="project" value="MGI"/>
</dbReference>
<dbReference type="GO" id="GO:0048870">
    <property type="term" value="P:cell motility"/>
    <property type="evidence" value="ECO:0000315"/>
    <property type="project" value="MGI"/>
</dbReference>
<dbReference type="GO" id="GO:0090398">
    <property type="term" value="P:cellular senescence"/>
    <property type="evidence" value="ECO:0007669"/>
    <property type="project" value="Ensembl"/>
</dbReference>
<dbReference type="GO" id="GO:0021953">
    <property type="term" value="P:central nervous system neuron differentiation"/>
    <property type="evidence" value="ECO:0000315"/>
    <property type="project" value="MGI"/>
</dbReference>
<dbReference type="GO" id="GO:0021697">
    <property type="term" value="P:cerebellar cortex formation"/>
    <property type="evidence" value="ECO:0000316"/>
    <property type="project" value="MGI"/>
</dbReference>
<dbReference type="GO" id="GO:0035987">
    <property type="term" value="P:endodermal cell differentiation"/>
    <property type="evidence" value="ECO:0000314"/>
    <property type="project" value="MGI"/>
</dbReference>
<dbReference type="GO" id="GO:0060502">
    <property type="term" value="P:epithelial cell proliferation involved in lung morphogenesis"/>
    <property type="evidence" value="ECO:0000316"/>
    <property type="project" value="MGI"/>
</dbReference>
<dbReference type="GO" id="GO:0038133">
    <property type="term" value="P:ERBB2-ERBB3 signaling pathway"/>
    <property type="evidence" value="ECO:0000314"/>
    <property type="project" value="MGI"/>
</dbReference>
<dbReference type="GO" id="GO:0070371">
    <property type="term" value="P:ERK1 and ERK2 cascade"/>
    <property type="evidence" value="ECO:0000316"/>
    <property type="project" value="MGI"/>
</dbReference>
<dbReference type="GO" id="GO:0060324">
    <property type="term" value="P:face development"/>
    <property type="evidence" value="ECO:0000316"/>
    <property type="project" value="MGI"/>
</dbReference>
<dbReference type="GO" id="GO:0048313">
    <property type="term" value="P:Golgi inheritance"/>
    <property type="evidence" value="ECO:0007669"/>
    <property type="project" value="Ensembl"/>
</dbReference>
<dbReference type="GO" id="GO:0007507">
    <property type="term" value="P:heart development"/>
    <property type="evidence" value="ECO:0000316"/>
    <property type="project" value="MGI"/>
</dbReference>
<dbReference type="GO" id="GO:0008286">
    <property type="term" value="P:insulin receptor signaling pathway"/>
    <property type="evidence" value="ECO:0000266"/>
    <property type="project" value="MGI"/>
</dbReference>
<dbReference type="GO" id="GO:0048009">
    <property type="term" value="P:insulin-like growth factor receptor signaling pathway"/>
    <property type="evidence" value="ECO:0000315"/>
    <property type="project" value="MGI"/>
</dbReference>
<dbReference type="GO" id="GO:0030216">
    <property type="term" value="P:keratinocyte differentiation"/>
    <property type="evidence" value="ECO:0000315"/>
    <property type="project" value="MGI"/>
</dbReference>
<dbReference type="GO" id="GO:0060711">
    <property type="term" value="P:labyrinthine layer development"/>
    <property type="evidence" value="ECO:0000315"/>
    <property type="project" value="MGI"/>
</dbReference>
<dbReference type="GO" id="GO:0060425">
    <property type="term" value="P:lung morphogenesis"/>
    <property type="evidence" value="ECO:0000316"/>
    <property type="project" value="MGI"/>
</dbReference>
<dbReference type="GO" id="GO:0000165">
    <property type="term" value="P:MAPK cascade"/>
    <property type="evidence" value="ECO:0000315"/>
    <property type="project" value="MGI"/>
</dbReference>
<dbReference type="GO" id="GO:0032402">
    <property type="term" value="P:melanosome transport"/>
    <property type="evidence" value="ECO:0007669"/>
    <property type="project" value="Ensembl"/>
</dbReference>
<dbReference type="GO" id="GO:0042552">
    <property type="term" value="P:myelination"/>
    <property type="evidence" value="ECO:0000315"/>
    <property type="project" value="MGI"/>
</dbReference>
<dbReference type="GO" id="GO:0008285">
    <property type="term" value="P:negative regulation of cell population proliferation"/>
    <property type="evidence" value="ECO:0007669"/>
    <property type="project" value="Ensembl"/>
</dbReference>
<dbReference type="GO" id="GO:0010629">
    <property type="term" value="P:negative regulation of gene expression"/>
    <property type="evidence" value="ECO:0007669"/>
    <property type="project" value="Ensembl"/>
</dbReference>
<dbReference type="GO" id="GO:0034111">
    <property type="term" value="P:negative regulation of homotypic cell-cell adhesion"/>
    <property type="evidence" value="ECO:0007669"/>
    <property type="project" value="Ensembl"/>
</dbReference>
<dbReference type="GO" id="GO:1903298">
    <property type="term" value="P:negative regulation of hypoxia-induced intrinsic apoptotic signaling pathway"/>
    <property type="evidence" value="ECO:0007669"/>
    <property type="project" value="Ensembl"/>
</dbReference>
<dbReference type="GO" id="GO:0048812">
    <property type="term" value="P:neuron projection morphogenesis"/>
    <property type="evidence" value="ECO:0007669"/>
    <property type="project" value="Ensembl"/>
</dbReference>
<dbReference type="GO" id="GO:0060674">
    <property type="term" value="P:placenta blood vessel development"/>
    <property type="evidence" value="ECO:0000315"/>
    <property type="project" value="MGI"/>
</dbReference>
<dbReference type="GO" id="GO:2001171">
    <property type="term" value="P:positive regulation of ATP biosynthetic process"/>
    <property type="evidence" value="ECO:0007669"/>
    <property type="project" value="Ensembl"/>
</dbReference>
<dbReference type="GO" id="GO:0010508">
    <property type="term" value="P:positive regulation of autophagy"/>
    <property type="evidence" value="ECO:0007669"/>
    <property type="project" value="Ensembl"/>
</dbReference>
<dbReference type="GO" id="GO:0050772">
    <property type="term" value="P:positive regulation of axonogenesis"/>
    <property type="evidence" value="ECO:0000316"/>
    <property type="project" value="MGI"/>
</dbReference>
<dbReference type="GO" id="GO:0030335">
    <property type="term" value="P:positive regulation of cell migration"/>
    <property type="evidence" value="ECO:0007669"/>
    <property type="project" value="Ensembl"/>
</dbReference>
<dbReference type="GO" id="GO:1903226">
    <property type="term" value="P:positive regulation of endodermal cell differentiation"/>
    <property type="evidence" value="ECO:0000314"/>
    <property type="project" value="MGI"/>
</dbReference>
<dbReference type="GO" id="GO:0070374">
    <property type="term" value="P:positive regulation of ERK1 and ERK2 cascade"/>
    <property type="evidence" value="ECO:0007669"/>
    <property type="project" value="Ensembl"/>
</dbReference>
<dbReference type="GO" id="GO:0010628">
    <property type="term" value="P:positive regulation of gene expression"/>
    <property type="evidence" value="ECO:0007669"/>
    <property type="project" value="Ensembl"/>
</dbReference>
<dbReference type="GO" id="GO:0043410">
    <property type="term" value="P:positive regulation of MAPK cascade"/>
    <property type="evidence" value="ECO:0000315"/>
    <property type="project" value="MGI"/>
</dbReference>
<dbReference type="GO" id="GO:0045933">
    <property type="term" value="P:positive regulation of muscle contraction"/>
    <property type="evidence" value="ECO:0007669"/>
    <property type="project" value="Ensembl"/>
</dbReference>
<dbReference type="GO" id="GO:0046579">
    <property type="term" value="P:positive regulation of Ras protein signal transduction"/>
    <property type="evidence" value="ECO:0000266"/>
    <property type="project" value="MGI"/>
</dbReference>
<dbReference type="GO" id="GO:0032968">
    <property type="term" value="P:positive regulation of transcription elongation by RNA polymerase II"/>
    <property type="evidence" value="ECO:0007669"/>
    <property type="project" value="Ensembl"/>
</dbReference>
<dbReference type="GO" id="GO:0048679">
    <property type="term" value="P:regulation of axon regeneration"/>
    <property type="evidence" value="ECO:0000316"/>
    <property type="project" value="MGI"/>
</dbReference>
<dbReference type="GO" id="GO:2000641">
    <property type="term" value="P:regulation of early endosome to late endosome transport"/>
    <property type="evidence" value="ECO:0000304"/>
    <property type="project" value="UniProtKB"/>
</dbReference>
<dbReference type="GO" id="GO:0090170">
    <property type="term" value="P:regulation of Golgi inheritance"/>
    <property type="evidence" value="ECO:0000304"/>
    <property type="project" value="UniProtKB"/>
</dbReference>
<dbReference type="GO" id="GO:0098696">
    <property type="term" value="P:regulation of neurotransmitter receptor localization to postsynaptic specialization membrane"/>
    <property type="evidence" value="ECO:0007669"/>
    <property type="project" value="Ensembl"/>
</dbReference>
<dbReference type="GO" id="GO:0032872">
    <property type="term" value="P:regulation of stress-activated MAPK cascade"/>
    <property type="evidence" value="ECO:0000304"/>
    <property type="project" value="UniProtKB"/>
</dbReference>
<dbReference type="GO" id="GO:0003056">
    <property type="term" value="P:regulation of vascular associated smooth muscle contraction"/>
    <property type="evidence" value="ECO:0007669"/>
    <property type="project" value="Ensembl"/>
</dbReference>
<dbReference type="GO" id="GO:0048678">
    <property type="term" value="P:response to axon injury"/>
    <property type="evidence" value="ECO:0007669"/>
    <property type="project" value="Ensembl"/>
</dbReference>
<dbReference type="GO" id="GO:0051384">
    <property type="term" value="P:response to glucocorticoid"/>
    <property type="evidence" value="ECO:0007669"/>
    <property type="project" value="Ensembl"/>
</dbReference>
<dbReference type="GO" id="GO:0006979">
    <property type="term" value="P:response to oxidative stress"/>
    <property type="evidence" value="ECO:0007669"/>
    <property type="project" value="Ensembl"/>
</dbReference>
<dbReference type="GO" id="GO:0014044">
    <property type="term" value="P:Schwann cell development"/>
    <property type="evidence" value="ECO:0000315"/>
    <property type="project" value="MGI"/>
</dbReference>
<dbReference type="GO" id="GO:0048538">
    <property type="term" value="P:thymus development"/>
    <property type="evidence" value="ECO:0000316"/>
    <property type="project" value="MGI"/>
</dbReference>
<dbReference type="GO" id="GO:0030878">
    <property type="term" value="P:thyroid gland development"/>
    <property type="evidence" value="ECO:0000316"/>
    <property type="project" value="MGI"/>
</dbReference>
<dbReference type="GO" id="GO:0060440">
    <property type="term" value="P:trachea formation"/>
    <property type="evidence" value="ECO:0000316"/>
    <property type="project" value="MGI"/>
</dbReference>
<dbReference type="GO" id="GO:0070328">
    <property type="term" value="P:triglyceride homeostasis"/>
    <property type="evidence" value="ECO:0007669"/>
    <property type="project" value="Ensembl"/>
</dbReference>
<dbReference type="GO" id="GO:0044342">
    <property type="term" value="P:type B pancreatic cell proliferation"/>
    <property type="evidence" value="ECO:0000315"/>
    <property type="project" value="MGI"/>
</dbReference>
<dbReference type="GO" id="GO:0047496">
    <property type="term" value="P:vesicle transport along microtubule"/>
    <property type="evidence" value="ECO:0007669"/>
    <property type="project" value="Ensembl"/>
</dbReference>
<dbReference type="CDD" id="cd06650">
    <property type="entry name" value="PKc_MEK1"/>
    <property type="match status" value="1"/>
</dbReference>
<dbReference type="FunFam" id="1.10.510.10:FF:000115">
    <property type="entry name" value="Dual specificity mitogen-activated protein kinase kinase 1"/>
    <property type="match status" value="1"/>
</dbReference>
<dbReference type="FunFam" id="3.30.200.20:FF:000100">
    <property type="entry name" value="Dual specificity mitogen-activated protein kinase kinase 1"/>
    <property type="match status" value="1"/>
</dbReference>
<dbReference type="Gene3D" id="3.30.200.20">
    <property type="entry name" value="Phosphorylase Kinase, domain 1"/>
    <property type="match status" value="1"/>
</dbReference>
<dbReference type="Gene3D" id="1.10.510.10">
    <property type="entry name" value="Transferase(Phosphotransferase) domain 1"/>
    <property type="match status" value="1"/>
</dbReference>
<dbReference type="InterPro" id="IPR011009">
    <property type="entry name" value="Kinase-like_dom_sf"/>
</dbReference>
<dbReference type="InterPro" id="IPR050915">
    <property type="entry name" value="MAP_kinase_kinase"/>
</dbReference>
<dbReference type="InterPro" id="IPR000719">
    <property type="entry name" value="Prot_kinase_dom"/>
</dbReference>
<dbReference type="InterPro" id="IPR017441">
    <property type="entry name" value="Protein_kinase_ATP_BS"/>
</dbReference>
<dbReference type="InterPro" id="IPR008271">
    <property type="entry name" value="Ser/Thr_kinase_AS"/>
</dbReference>
<dbReference type="PANTHER" id="PTHR47448">
    <property type="entry name" value="DUAL SPECIFICITY MITOGEN-ACTIVATED PROTEIN KINASE KINASE DSOR1-LIKE PROTEIN"/>
    <property type="match status" value="1"/>
</dbReference>
<dbReference type="PANTHER" id="PTHR47448:SF2">
    <property type="entry name" value="MITOGEN-ACTIVATED PROTEIN KINASE KINASE 1"/>
    <property type="match status" value="1"/>
</dbReference>
<dbReference type="Pfam" id="PF00069">
    <property type="entry name" value="Pkinase"/>
    <property type="match status" value="1"/>
</dbReference>
<dbReference type="SMART" id="SM00220">
    <property type="entry name" value="S_TKc"/>
    <property type="match status" value="1"/>
</dbReference>
<dbReference type="SUPFAM" id="SSF56112">
    <property type="entry name" value="Protein kinase-like (PK-like)"/>
    <property type="match status" value="1"/>
</dbReference>
<dbReference type="PROSITE" id="PS00107">
    <property type="entry name" value="PROTEIN_KINASE_ATP"/>
    <property type="match status" value="1"/>
</dbReference>
<dbReference type="PROSITE" id="PS50011">
    <property type="entry name" value="PROTEIN_KINASE_DOM"/>
    <property type="match status" value="1"/>
</dbReference>
<dbReference type="PROSITE" id="PS00108">
    <property type="entry name" value="PROTEIN_KINASE_ST"/>
    <property type="match status" value="1"/>
</dbReference>
<proteinExistence type="evidence at protein level"/>
<sequence>MPKKKPTPIQLNPAPDGSAVNGTSSAETNLEALQKKLEELELDEQQRKRLEAFLTQKQKVGELKDDDFEKISELGAGNGGVVFKVSHKPSGLVMARKLIHLEIKPAIRNQIIRELQVLHECNSPYIVGFYGAFYSDGEISICMEHMDGGSLDQVLKKAGRIPEQILGKVSIAVIKGLTYLREKHKIMHRDVKPSNILVNSRGEIKLCDFGVSGQLIDSMANSFVGTRSYMSPERLQGTHYSVQSDIWSMGLSLVEMAVGRYPIPPPDAKELELLFGCHVEGDAAETPPRPRTPGRPLSSYGMDSRPPMAIFELLDYIVNEPPPKLPSGVFSLEFQDFVNKCLIKNPAERADLKQLMVHAFIKRSDAEEVDFAGWLCSTIGLNQPSTPTHAASI</sequence>
<feature type="chain" id="PRO_0000086366" description="Dual specificity mitogen-activated protein kinase kinase 1">
    <location>
        <begin position="1"/>
        <end position="393"/>
    </location>
</feature>
<feature type="domain" description="Protein kinase" evidence="5">
    <location>
        <begin position="68"/>
        <end position="361"/>
    </location>
</feature>
<feature type="region of interest" description="Disordered" evidence="7">
    <location>
        <begin position="1"/>
        <end position="27"/>
    </location>
</feature>
<feature type="region of interest" description="RAF1-binding" evidence="1">
    <location>
        <begin position="270"/>
        <end position="307"/>
    </location>
</feature>
<feature type="active site" description="Proton acceptor" evidence="5 6">
    <location>
        <position position="190"/>
    </location>
</feature>
<feature type="binding site" evidence="5">
    <location>
        <begin position="74"/>
        <end position="82"/>
    </location>
    <ligand>
        <name>ATP</name>
        <dbReference type="ChEBI" id="CHEBI:30616"/>
    </ligand>
</feature>
<feature type="binding site" evidence="5">
    <location>
        <position position="97"/>
    </location>
    <ligand>
        <name>ATP</name>
        <dbReference type="ChEBI" id="CHEBI:30616"/>
    </ligand>
</feature>
<feature type="site" description="Cleavage; by anthrax lethal factor" evidence="1">
    <location>
        <begin position="8"/>
        <end position="9"/>
    </location>
</feature>
<feature type="modified residue" description="Phosphoserine; by RAF" evidence="8">
    <location>
        <position position="218"/>
    </location>
</feature>
<feature type="modified residue" description="Phosphoserine; by RAF" evidence="4">
    <location>
        <position position="222"/>
    </location>
</feature>
<feature type="modified residue" description="Phosphothreonine" evidence="14">
    <location>
        <position position="286"/>
    </location>
</feature>
<feature type="modified residue" description="Phosphothreonine; by MAPK1" evidence="3">
    <location>
        <position position="292"/>
    </location>
</feature>
<feature type="modified residue" description="Phosphoserine; by PAK" evidence="4">
    <location>
        <position position="298"/>
    </location>
</feature>
<feature type="mutagenesis site" description="Impairs interaction with MAP2K2/MEK2." evidence="10">
    <original>N</original>
    <variation>G</variation>
    <location>
        <position position="78"/>
    </location>
</feature>
<feature type="mutagenesis site" description="Results in hyperphosphorylation of the RAF-dependent sites and prolonged ERK phosphorylation." evidence="10">
    <original>T</original>
    <variation>A</variation>
    <location>
        <position position="292"/>
    </location>
</feature>
<feature type="mutagenesis site" description="Results in hypophosphorylation of the RAF-dependent sites and faster ERK inactivation." evidence="10">
    <original>T</original>
    <variation>D</variation>
    <location>
        <position position="292"/>
    </location>
</feature>
<feature type="sequence conflict" description="In Ref. 3; AA sequence." evidence="13" ref="3">
    <original>W</original>
    <variation>Q</variation>
    <location>
        <position position="374"/>
    </location>
</feature>
<accession>P31938</accession>
<name>MP2K1_MOUSE</name>
<gene>
    <name type="primary">Map2k1</name>
    <name type="synonym">Mek1</name>
    <name type="synonym">Prkmk1</name>
</gene>
<comment type="function">
    <text evidence="4 10">Dual specificity protein kinase which acts as an essential component of the MAP kinase signal transduction pathway. Binding of extracellular ligands such as growth factors, cytokines and hormones to their cell-surface receptors activates RAS and this initiates RAF1 activation. RAF1 then further activates the dual-specificity protein kinases MAP2K1/MEK1 and MAP2K2/MEK2. Both MAP2K1/MEK1 and MAP2K2/MEK2 function specifically in the MAPK/ERK cascade, and catalyze the concomitant phosphorylation of a threonine and a tyrosine residue in a Thr-Glu-Tyr sequence located in the extracellular signal-regulated kinases MAPK3/ERK1 and MAPK1/ERK2, leading to their activation and further transduction of the signal within the MAPK/ERK cascade. Activates BRAF in a KSR1 or KSR2-dependent manner; by binding to KSR1 or KSR2 releases the inhibitory intramolecular interaction between KSR1 or KSR2 protein kinase and N-terminal domains which promotes KSR1 or KSR2-BRAF dimerization and BRAF activation (By similarity). Depending on the cellular context, this pathway mediates diverse biological functions such as cell growth, adhesion, survival and differentiation, predominantly through the regulation of transcription, metabolism and cytoskeletal rearrangements. One target of the MAPK/ERK cascade is peroxisome proliferator-activated receptor gamma (PPARG), a nuclear receptor that promotes differentiation and apoptosis. MAP2K1/MEK1 has been shown to export PPARG from the nucleus. The MAPK/ERK cascade is also involved in the regulation of endosomal dynamics, including lysosome processing and endosome cycling through the perinuclear recycling compartment (PNRC), as well as in the fragmentation of the Golgi apparatus during mitosis.</text>
</comment>
<comment type="catalytic activity">
    <reaction>
        <text>L-seryl-[protein] + ATP = O-phospho-L-seryl-[protein] + ADP + H(+)</text>
        <dbReference type="Rhea" id="RHEA:17989"/>
        <dbReference type="Rhea" id="RHEA-COMP:9863"/>
        <dbReference type="Rhea" id="RHEA-COMP:11604"/>
        <dbReference type="ChEBI" id="CHEBI:15378"/>
        <dbReference type="ChEBI" id="CHEBI:29999"/>
        <dbReference type="ChEBI" id="CHEBI:30616"/>
        <dbReference type="ChEBI" id="CHEBI:83421"/>
        <dbReference type="ChEBI" id="CHEBI:456216"/>
        <dbReference type="EC" id="2.7.12.2"/>
    </reaction>
</comment>
<comment type="catalytic activity">
    <reaction>
        <text>L-threonyl-[protein] + ATP = O-phospho-L-threonyl-[protein] + ADP + H(+)</text>
        <dbReference type="Rhea" id="RHEA:46608"/>
        <dbReference type="Rhea" id="RHEA-COMP:11060"/>
        <dbReference type="Rhea" id="RHEA-COMP:11605"/>
        <dbReference type="ChEBI" id="CHEBI:15378"/>
        <dbReference type="ChEBI" id="CHEBI:30013"/>
        <dbReference type="ChEBI" id="CHEBI:30616"/>
        <dbReference type="ChEBI" id="CHEBI:61977"/>
        <dbReference type="ChEBI" id="CHEBI:456216"/>
        <dbReference type="EC" id="2.7.12.2"/>
    </reaction>
</comment>
<comment type="catalytic activity">
    <reaction>
        <text>L-tyrosyl-[protein] + ATP = O-phospho-L-tyrosyl-[protein] + ADP + H(+)</text>
        <dbReference type="Rhea" id="RHEA:10596"/>
        <dbReference type="Rhea" id="RHEA-COMP:10136"/>
        <dbReference type="Rhea" id="RHEA-COMP:20101"/>
        <dbReference type="ChEBI" id="CHEBI:15378"/>
        <dbReference type="ChEBI" id="CHEBI:30616"/>
        <dbReference type="ChEBI" id="CHEBI:46858"/>
        <dbReference type="ChEBI" id="CHEBI:61978"/>
        <dbReference type="ChEBI" id="CHEBI:456216"/>
        <dbReference type="EC" id="2.7.12.2"/>
    </reaction>
</comment>
<comment type="activity regulation">
    <text evidence="3 4">Ras proteins such as HRAS mediate the activation of RAF proteins such as RAF1 or BRAF which in turn activate extracellular signal-regulated kinases (ERK) through MAPK (mitogen-activated protein kinases) and ERK kinases MAP2K1/MEK1 and MAP2K2/MEK2. Activation occurs through phosphorylation of Ser-218 and Ser-222 (By similarity). MAP2K1/MEK1 binds KSR1 or KSR2 releasing the inhibitory intramolecular interaction between KSR1 or KSR2 protein kinase and N-terminal domains (By similarity). This allows KSR1 or KSR2 dimerization with BRAF leading to BRAF activation and phosphorylation of MAP2K1 (By similarity). MAP2K1/MEK1 is also the target of negative feed-back regulation by its substrate kinases, such as MAPK1/ERK2. These phosphorylate MAP2K1/MEK1 on Thr-292, thereby facilitating dephosphorylation of the activating residues Ser-218 and Ser-222. Inhibited by serine/threonine phosphatase 2A (By similarity).</text>
</comment>
<comment type="subunit">
    <text evidence="2 3 4 9 10 11">Found in a complex with at least BRAF, HRAS, MAP2K1, MAPK3/ERK1 and RGS14 (By similarity). Forms a heterodimer with MAP2K2/MEK2 (PubMed:19219045). Forms heterodimers with KSR2 which further dimerize to form tetramers (By similarity). Interacts with KSR1 or KSR2 and BRAF; the interaction with KSR1 or KSR2 mediates KSR1-BRAF or KSR2-BRAF dimerization (By similarity). Interacts with ARBB2, LAMTOR3, MAPK1/ERK2 and RAF1 (By similarity). Interacts with MAPK1/ERK2 (By similarity). Interacts with MORG1 (PubMed:15118098). Interacts with PPARG (By similarity). Interacts with SGK1 (By similarity). Interacts with BIRC6/bruce (By similarity). Interacts with KAT7; the interaction promotes KAT7 phosphorylation (PubMed:23319590). Interacts with RAF1 and NEK10; the interaction is required for ERK1/2-signaling pathway activation in response to UV irradiation (By similarity). Interacts with TRAF3IP3 (By similarity). Interacts with MOS (By similarity).</text>
</comment>
<comment type="interaction">
    <interactant intactId="EBI-298860">
        <id>P31938</id>
    </interactant>
    <interactant intactId="EBI-9548773">
        <id>Q8CFP6</id>
        <label>Dnajc27</label>
    </interactant>
    <organismsDiffer>false</organismsDiffer>
    <experiments>3</experiments>
</comment>
<comment type="interaction">
    <interactant intactId="EBI-298860">
        <id>P31938</id>
    </interactant>
    <interactant intactId="EBI-9549291">
        <id>Q9ESN9-2</id>
        <label>Mapk8ip3</label>
    </interactant>
    <organismsDiffer>false</organismsDiffer>
    <experiments>3</experiments>
</comment>
<comment type="interaction">
    <interactant intactId="EBI-298860">
        <id>P31938</id>
    </interactant>
    <interactant intactId="EBI-714158">
        <id>Q13526</id>
        <label>PIN1</label>
    </interactant>
    <organismsDiffer>true</organismsDiffer>
    <experiments>4</experiments>
</comment>
<comment type="subcellular location">
    <subcellularLocation>
        <location evidence="4">Cytoplasm</location>
        <location evidence="4">Cytoskeleton</location>
        <location evidence="4">Microtubule organizing center</location>
        <location evidence="4">Centrosome</location>
    </subcellularLocation>
    <subcellularLocation>
        <location evidence="4">Cytoplasm</location>
        <location evidence="4">Cytoskeleton</location>
        <location evidence="4">Microtubule organizing center</location>
        <location evidence="4">Spindle pole body</location>
    </subcellularLocation>
    <subcellularLocation>
        <location evidence="8">Cytoplasm</location>
    </subcellularLocation>
    <subcellularLocation>
        <location evidence="4">Nucleus</location>
    </subcellularLocation>
    <subcellularLocation>
        <location evidence="8">Membrane</location>
        <topology evidence="8">Peripheral membrane protein</topology>
    </subcellularLocation>
    <text evidence="4 8">Localizes at centrosomes during prometaphase, midzone during anaphase and midbody during telophase/cytokinesis (By similarity). Membrane localization is probably regulated by its interaction with KSR1 (PubMed:10409742).</text>
</comment>
<comment type="domain">
    <text evidence="1">The proline-rich region localized between residues 270 and 307 is important for binding to RAF1 and activation of MAP2K1/MEK1.</text>
</comment>
<comment type="PTM">
    <text evidence="4 10 12">Phosphorylation at Ser-218 and Ser-222 by MAP kinase kinase kinases (BRAF or MEKK1) positively regulates kinase activity (PubMed:8385802). Also phosphorylated at Thr-292 by MAPK1/ERK2 and at Ser-298 by PAK (PubMed:19219045). MAPK1/ERK2 phosphorylation of Thr-292 occurs in response to cellular adhesion and leads to inhibition of Ser-298 phosphorylation by PAK (PubMed:19219045). Autophosphorylated at Ser-218 and Ser-222, autophosphosphorylation is promoted by NEK10 following UV irradiation (By similarity).</text>
</comment>
<comment type="disruption phenotype">
    <text evidence="10">Affects fibroblast shape and impairs haptotaxis and adhesion-dependent ERK-signaling.</text>
</comment>
<comment type="similarity">
    <text evidence="13">Belongs to the protein kinase superfamily. STE Ser/Thr protein kinase family. MAP kinase kinase subfamily.</text>
</comment>